<comment type="function">
    <text evidence="3">Alkaline protease that allows assimilation of proteinaceous substrates. Acts as a significant virulence factor in invasive aspergillosis. Required for regular sporulation.</text>
</comment>
<comment type="catalytic activity">
    <reaction>
        <text>Hydrolysis of proteins with broad specificity, and of Bz-Arg-OEt &gt; Ac-Tyr-OEt. Does not hydrolyze peptide amides.</text>
        <dbReference type="EC" id="3.4.21.63"/>
    </reaction>
</comment>
<comment type="allergen">
    <text evidence="4">Acts as a major allergen in patients suffering from extrinsic bronchial asthma. Binds to IgE.</text>
</comment>
<comment type="similarity">
    <text evidence="5">Belongs to the peptidase S8 family.</text>
</comment>
<evidence type="ECO:0000255" key="1"/>
<evidence type="ECO:0000255" key="2">
    <source>
        <dbReference type="PROSITE-ProRule" id="PRU01240"/>
    </source>
</evidence>
<evidence type="ECO:0000269" key="3">
    <source>
    </source>
</evidence>
<evidence type="ECO:0000269" key="4">
    <source>
    </source>
</evidence>
<evidence type="ECO:0000305" key="5"/>
<proteinExistence type="evidence at protein level"/>
<accession>P87184</accession>
<accession>E9QST4</accession>
<accession>Q4WUP6</accession>
<protein>
    <recommendedName>
        <fullName>Alkaline protease 2</fullName>
        <shortName>ALP2</shortName>
        <ecNumber>3.4.21.63</ecNumber>
    </recommendedName>
    <alternativeName>
        <fullName>Autophagic serine protease alp2</fullName>
    </alternativeName>
    <allergenName>Asp f 18</allergenName>
</protein>
<sequence length="495" mass="52640">MKGYLSLSILPLLVAASPVVVDSIHNGAAPILSSMNAKEVPDSYIVVFKKHVNAESAAAHHSWVQDIHSAQNERVELRKRSLFGFGEEAYLGLKNTFDIAGSLVGYSGHFHEDVIEQVRKHPDVEYIEKDSEVHTMEDPTVEKSAPWGLARISHRDSLSFGTFNKYLYASEGGEGVDAYTIDTGINVDHVDFEGRAQWGKTIPTDDEDADGNGHGTHCSGTIAGRKYGVAKKANLYAVKVLRSSGSGTMSDVVAGVEWAVKSHLKKVKDAKDGKIKGFKGSVANMSLGGGKSRTLEAAVNAGVEAGLHFAVAAGNDNADACNYSPAAAENPITVGASTLQDERAYFSNYGKCTDIFAPGLNILSTWIGSKHAVNTISGTSMASPHIAGLLAYFVSLQPSKDSAFAVDELTPKKLKKDIIAIATQGALTDIPSDTPNLLAWNGGGSSNYTDIIASGGYKVNASVKDRFEGLVHKAEKLLTEELGAIYSEIHDAAVA</sequence>
<name>ALP2_ASPFU</name>
<organism>
    <name type="scientific">Aspergillus fumigatus (strain ATCC MYA-4609 / CBS 101355 / FGSC A1100 / Af293)</name>
    <name type="common">Neosartorya fumigata</name>
    <dbReference type="NCBI Taxonomy" id="330879"/>
    <lineage>
        <taxon>Eukaryota</taxon>
        <taxon>Fungi</taxon>
        <taxon>Dikarya</taxon>
        <taxon>Ascomycota</taxon>
        <taxon>Pezizomycotina</taxon>
        <taxon>Eurotiomycetes</taxon>
        <taxon>Eurotiomycetidae</taxon>
        <taxon>Eurotiales</taxon>
        <taxon>Aspergillaceae</taxon>
        <taxon>Aspergillus</taxon>
        <taxon>Aspergillus subgen. Fumigati</taxon>
    </lineage>
</organism>
<gene>
    <name type="primary">alp2</name>
    <name type="ORF">AFUA_5G09210</name>
</gene>
<keyword id="KW-0020">Allergen</keyword>
<keyword id="KW-0903">Direct protein sequencing</keyword>
<keyword id="KW-0325">Glycoprotein</keyword>
<keyword id="KW-0378">Hydrolase</keyword>
<keyword id="KW-0645">Protease</keyword>
<keyword id="KW-1185">Reference proteome</keyword>
<keyword id="KW-0720">Serine protease</keyword>
<keyword id="KW-0732">Signal</keyword>
<keyword id="KW-0749">Sporulation</keyword>
<keyword id="KW-0843">Virulence</keyword>
<keyword id="KW-0865">Zymogen</keyword>
<dbReference type="EC" id="3.4.21.63"/>
<dbReference type="EMBL" id="Y13338">
    <property type="protein sequence ID" value="CAA73782.1"/>
    <property type="molecule type" value="mRNA"/>
</dbReference>
<dbReference type="EMBL" id="AJ243145">
    <property type="protein sequence ID" value="CAB45520.1"/>
    <property type="molecule type" value="Genomic_DNA"/>
</dbReference>
<dbReference type="EMBL" id="AAHF01000003">
    <property type="protein sequence ID" value="EAL91680.1"/>
    <property type="molecule type" value="Genomic_DNA"/>
</dbReference>
<dbReference type="RefSeq" id="XP_753718.1">
    <property type="nucleotide sequence ID" value="XM_748625.1"/>
</dbReference>
<dbReference type="SMR" id="P87184"/>
<dbReference type="FunCoup" id="P87184">
    <property type="interactions" value="329"/>
</dbReference>
<dbReference type="STRING" id="330879.P87184"/>
<dbReference type="Allergome" id="3114">
    <property type="allergen name" value="Asp f 18.0101"/>
</dbReference>
<dbReference type="Allergome" id="70">
    <property type="allergen name" value="Asp f 18"/>
</dbReference>
<dbReference type="GlyCosmos" id="P87184">
    <property type="glycosylation" value="3 sites, No reported glycans"/>
</dbReference>
<dbReference type="EnsemblFungi" id="EAL91680">
    <property type="protein sequence ID" value="EAL91680"/>
    <property type="gene ID" value="AFUA_5G09210"/>
</dbReference>
<dbReference type="GeneID" id="3510885"/>
<dbReference type="KEGG" id="afm:AFUA_5G09210"/>
<dbReference type="VEuPathDB" id="FungiDB:Afu5g09210"/>
<dbReference type="eggNOG" id="KOG1153">
    <property type="taxonomic scope" value="Eukaryota"/>
</dbReference>
<dbReference type="HOGENOM" id="CLU_011263_1_4_1"/>
<dbReference type="InParanoid" id="P87184"/>
<dbReference type="OMA" id="RHPDVDY"/>
<dbReference type="OrthoDB" id="206201at2759"/>
<dbReference type="Proteomes" id="UP000002530">
    <property type="component" value="Chromosome 5"/>
</dbReference>
<dbReference type="GO" id="GO:0005615">
    <property type="term" value="C:extracellular space"/>
    <property type="evidence" value="ECO:0000318"/>
    <property type="project" value="GO_Central"/>
</dbReference>
<dbReference type="GO" id="GO:0005773">
    <property type="term" value="C:vacuole"/>
    <property type="evidence" value="ECO:0007669"/>
    <property type="project" value="GOC"/>
</dbReference>
<dbReference type="GO" id="GO:0019863">
    <property type="term" value="F:IgE binding"/>
    <property type="evidence" value="ECO:0000314"/>
    <property type="project" value="UniProtKB"/>
</dbReference>
<dbReference type="GO" id="GO:0004252">
    <property type="term" value="F:serine-type endopeptidase activity"/>
    <property type="evidence" value="ECO:0000318"/>
    <property type="project" value="GO_Central"/>
</dbReference>
<dbReference type="GO" id="GO:0043936">
    <property type="term" value="P:asexual sporulation resulting in formation of a cellular spore"/>
    <property type="evidence" value="ECO:0000315"/>
    <property type="project" value="AspGD"/>
</dbReference>
<dbReference type="GO" id="GO:0000425">
    <property type="term" value="P:pexophagy"/>
    <property type="evidence" value="ECO:0007669"/>
    <property type="project" value="EnsemblFungi"/>
</dbReference>
<dbReference type="GO" id="GO:0007039">
    <property type="term" value="P:protein catabolic process in the vacuole"/>
    <property type="evidence" value="ECO:0007669"/>
    <property type="project" value="EnsemblFungi"/>
</dbReference>
<dbReference type="GO" id="GO:0006508">
    <property type="term" value="P:proteolysis"/>
    <property type="evidence" value="ECO:0007669"/>
    <property type="project" value="UniProtKB-KW"/>
</dbReference>
<dbReference type="CDD" id="cd04077">
    <property type="entry name" value="Peptidases_S8_PCSK9_ProteinaseK_like"/>
    <property type="match status" value="1"/>
</dbReference>
<dbReference type="FunFam" id="3.30.70.80:FF:000006">
    <property type="entry name" value="Autophagic serine protease Alp2"/>
    <property type="match status" value="1"/>
</dbReference>
<dbReference type="FunFam" id="3.40.50.200:FF:000007">
    <property type="entry name" value="Subtilisin-like serine protease"/>
    <property type="match status" value="1"/>
</dbReference>
<dbReference type="Gene3D" id="3.30.70.80">
    <property type="entry name" value="Peptidase S8 propeptide/proteinase inhibitor I9"/>
    <property type="match status" value="1"/>
</dbReference>
<dbReference type="Gene3D" id="3.40.50.200">
    <property type="entry name" value="Peptidase S8/S53 domain"/>
    <property type="match status" value="1"/>
</dbReference>
<dbReference type="InterPro" id="IPR034193">
    <property type="entry name" value="PCSK9_ProteinaseK-like"/>
</dbReference>
<dbReference type="InterPro" id="IPR000209">
    <property type="entry name" value="Peptidase_S8/S53_dom"/>
</dbReference>
<dbReference type="InterPro" id="IPR036852">
    <property type="entry name" value="Peptidase_S8/S53_dom_sf"/>
</dbReference>
<dbReference type="InterPro" id="IPR022398">
    <property type="entry name" value="Peptidase_S8_His-AS"/>
</dbReference>
<dbReference type="InterPro" id="IPR023828">
    <property type="entry name" value="Peptidase_S8_Ser-AS"/>
</dbReference>
<dbReference type="InterPro" id="IPR050131">
    <property type="entry name" value="Peptidase_S8_subtilisin-like"/>
</dbReference>
<dbReference type="InterPro" id="IPR015500">
    <property type="entry name" value="Peptidase_S8_subtilisin-rel"/>
</dbReference>
<dbReference type="InterPro" id="IPR010259">
    <property type="entry name" value="S8pro/Inhibitor_I9"/>
</dbReference>
<dbReference type="InterPro" id="IPR037045">
    <property type="entry name" value="S8pro/Inhibitor_I9_sf"/>
</dbReference>
<dbReference type="PANTHER" id="PTHR43806:SF11">
    <property type="entry name" value="CEREVISIN-RELATED"/>
    <property type="match status" value="1"/>
</dbReference>
<dbReference type="PANTHER" id="PTHR43806">
    <property type="entry name" value="PEPTIDASE S8"/>
    <property type="match status" value="1"/>
</dbReference>
<dbReference type="Pfam" id="PF05922">
    <property type="entry name" value="Inhibitor_I9"/>
    <property type="match status" value="1"/>
</dbReference>
<dbReference type="Pfam" id="PF00082">
    <property type="entry name" value="Peptidase_S8"/>
    <property type="match status" value="1"/>
</dbReference>
<dbReference type="PRINTS" id="PR00723">
    <property type="entry name" value="SUBTILISIN"/>
</dbReference>
<dbReference type="SUPFAM" id="SSF54897">
    <property type="entry name" value="Protease propeptides/inhibitors"/>
    <property type="match status" value="1"/>
</dbReference>
<dbReference type="SUPFAM" id="SSF52743">
    <property type="entry name" value="Subtilisin-like"/>
    <property type="match status" value="1"/>
</dbReference>
<dbReference type="PROSITE" id="PS51892">
    <property type="entry name" value="SUBTILASE"/>
    <property type="match status" value="1"/>
</dbReference>
<dbReference type="PROSITE" id="PS00137">
    <property type="entry name" value="SUBTILASE_HIS"/>
    <property type="match status" value="1"/>
</dbReference>
<dbReference type="PROSITE" id="PS00138">
    <property type="entry name" value="SUBTILASE_SER"/>
    <property type="match status" value="1"/>
</dbReference>
<reference key="1">
    <citation type="journal article" date="2000" name="Int. J. Med. Microbiol.">
        <title>Molecular characterization and influence on fungal development of ALP2, a novel serine proteinase from Aspergillus fumigatus.</title>
        <authorList>
            <person name="Reichard U."/>
            <person name="Cole G.T."/>
            <person name="Hill T.W."/>
            <person name="Ruchel R."/>
            <person name="Monod M."/>
        </authorList>
    </citation>
    <scope>NUCLEOTIDE SEQUENCE [GENOMIC RNA / MRNA]</scope>
    <scope>FUNCTION</scope>
    <source>
        <strain>D141</strain>
    </source>
</reference>
<reference key="2">
    <citation type="journal article" date="2005" name="Nature">
        <title>Genomic sequence of the pathogenic and allergenic filamentous fungus Aspergillus fumigatus.</title>
        <authorList>
            <person name="Nierman W.C."/>
            <person name="Pain A."/>
            <person name="Anderson M.J."/>
            <person name="Wortman J.R."/>
            <person name="Kim H.S."/>
            <person name="Arroyo J."/>
            <person name="Berriman M."/>
            <person name="Abe K."/>
            <person name="Archer D.B."/>
            <person name="Bermejo C."/>
            <person name="Bennett J.W."/>
            <person name="Bowyer P."/>
            <person name="Chen D."/>
            <person name="Collins M."/>
            <person name="Coulsen R."/>
            <person name="Davies R."/>
            <person name="Dyer P.S."/>
            <person name="Farman M.L."/>
            <person name="Fedorova N."/>
            <person name="Fedorova N.D."/>
            <person name="Feldblyum T.V."/>
            <person name="Fischer R."/>
            <person name="Fosker N."/>
            <person name="Fraser A."/>
            <person name="Garcia J.L."/>
            <person name="Garcia M.J."/>
            <person name="Goble A."/>
            <person name="Goldman G.H."/>
            <person name="Gomi K."/>
            <person name="Griffith-Jones S."/>
            <person name="Gwilliam R."/>
            <person name="Haas B.J."/>
            <person name="Haas H."/>
            <person name="Harris D.E."/>
            <person name="Horiuchi H."/>
            <person name="Huang J."/>
            <person name="Humphray S."/>
            <person name="Jimenez J."/>
            <person name="Keller N."/>
            <person name="Khouri H."/>
            <person name="Kitamoto K."/>
            <person name="Kobayashi T."/>
            <person name="Konzack S."/>
            <person name="Kulkarni R."/>
            <person name="Kumagai T."/>
            <person name="Lafton A."/>
            <person name="Latge J.-P."/>
            <person name="Li W."/>
            <person name="Lord A."/>
            <person name="Lu C."/>
            <person name="Majoros W.H."/>
            <person name="May G.S."/>
            <person name="Miller B.L."/>
            <person name="Mohamoud Y."/>
            <person name="Molina M."/>
            <person name="Monod M."/>
            <person name="Mouyna I."/>
            <person name="Mulligan S."/>
            <person name="Murphy L.D."/>
            <person name="O'Neil S."/>
            <person name="Paulsen I."/>
            <person name="Penalva M.A."/>
            <person name="Pertea M."/>
            <person name="Price C."/>
            <person name="Pritchard B.L."/>
            <person name="Quail M.A."/>
            <person name="Rabbinowitsch E."/>
            <person name="Rawlins N."/>
            <person name="Rajandream M.A."/>
            <person name="Reichard U."/>
            <person name="Renauld H."/>
            <person name="Robson G.D."/>
            <person name="Rodriguez de Cordoba S."/>
            <person name="Rodriguez-Pena J.M."/>
            <person name="Ronning C.M."/>
            <person name="Rutter S."/>
            <person name="Salzberg S.L."/>
            <person name="Sanchez M."/>
            <person name="Sanchez-Ferrero J.C."/>
            <person name="Saunders D."/>
            <person name="Seeger K."/>
            <person name="Squares R."/>
            <person name="Squares S."/>
            <person name="Takeuchi M."/>
            <person name="Tekaia F."/>
            <person name="Turner G."/>
            <person name="Vazquez de Aldana C.R."/>
            <person name="Weidman J."/>
            <person name="White O."/>
            <person name="Woodward J.R."/>
            <person name="Yu J.-H."/>
            <person name="Fraser C.M."/>
            <person name="Galagan J.E."/>
            <person name="Asai K."/>
            <person name="Machida M."/>
            <person name="Hall N."/>
            <person name="Barrell B.G."/>
            <person name="Denning D.W."/>
        </authorList>
    </citation>
    <scope>NUCLEOTIDE SEQUENCE [LARGE SCALE GENOMIC DNA]</scope>
    <source>
        <strain>ATCC MYA-4609 / CBS 101355 / FGSC A1100 / Af293</strain>
    </source>
</reference>
<reference key="3">
    <citation type="journal article" date="2001" name="Clin. Exp. Allergy">
        <title>Identification of vacuolar serine proteinase as a major allergen of Aspergillus fumigatus by immunoblotting and N-terminal amino acid sequence analysis.</title>
        <authorList>
            <person name="Shen H.D."/>
            <person name="Lin W.L."/>
            <person name="Tam M.F."/>
            <person name="Chou H."/>
            <person name="Wang C.W."/>
            <person name="Tsai J.J."/>
            <person name="Wang S.R."/>
            <person name="Han S.H."/>
        </authorList>
    </citation>
    <scope>PROTEIN SEQUENCE OF 137-145 AND 168-176</scope>
    <scope>ALLERGEN</scope>
    <scope>IGE-BINDING</scope>
</reference>
<feature type="signal peptide" evidence="1">
    <location>
        <begin position="1"/>
        <end position="16"/>
    </location>
</feature>
<feature type="propeptide" id="PRO_0000412304" evidence="4">
    <location>
        <begin position="17"/>
        <end position="136"/>
    </location>
</feature>
<feature type="chain" id="PRO_0000412305" description="Alkaline protease 2">
    <location>
        <begin position="137"/>
        <end position="495"/>
    </location>
</feature>
<feature type="domain" description="Inhibitor I9" evidence="1">
    <location>
        <begin position="43"/>
        <end position="136"/>
    </location>
</feature>
<feature type="domain" description="Peptidase S8" evidence="2">
    <location>
        <begin position="146"/>
        <end position="452"/>
    </location>
</feature>
<feature type="active site" description="Charge relay system" evidence="2">
    <location>
        <position position="182"/>
    </location>
</feature>
<feature type="active site" description="Charge relay system" evidence="2">
    <location>
        <position position="214"/>
    </location>
</feature>
<feature type="active site" description="Charge relay system" evidence="2">
    <location>
        <position position="380"/>
    </location>
</feature>
<feature type="glycosylation site" description="N-linked (GlcNAc...) asparagine" evidence="1">
    <location>
        <position position="284"/>
    </location>
</feature>
<feature type="glycosylation site" description="N-linked (GlcNAc...) asparagine" evidence="1">
    <location>
        <position position="447"/>
    </location>
</feature>
<feature type="glycosylation site" description="N-linked (GlcNAc...) asparagine" evidence="1">
    <location>
        <position position="460"/>
    </location>
</feature>